<reference key="1">
    <citation type="journal article" date="2008" name="Antimicrob. Agents Chemother.">
        <title>Mutated response regulator graR is responsible for phenotypic conversion of Staphylococcus aureus from heterogeneous vancomycin-intermediate resistance to vancomycin-intermediate resistance.</title>
        <authorList>
            <person name="Neoh H.-M."/>
            <person name="Cui L."/>
            <person name="Yuzawa H."/>
            <person name="Takeuchi F."/>
            <person name="Matsuo M."/>
            <person name="Hiramatsu K."/>
        </authorList>
    </citation>
    <scope>NUCLEOTIDE SEQUENCE [LARGE SCALE GENOMIC DNA]</scope>
    <source>
        <strain>Mu3 / ATCC 700698</strain>
    </source>
</reference>
<protein>
    <recommendedName>
        <fullName>Phenol-soluble modulin alpha 2 peptide</fullName>
    </recommendedName>
</protein>
<gene>
    <name type="primary">psmA2</name>
    <name type="ordered locus">SAHV_0449.3</name>
</gene>
<organism>
    <name type="scientific">Staphylococcus aureus (strain Mu3 / ATCC 700698)</name>
    <dbReference type="NCBI Taxonomy" id="418127"/>
    <lineage>
        <taxon>Bacteria</taxon>
        <taxon>Bacillati</taxon>
        <taxon>Bacillota</taxon>
        <taxon>Bacilli</taxon>
        <taxon>Bacillales</taxon>
        <taxon>Staphylococcaceae</taxon>
        <taxon>Staphylococcus</taxon>
    </lineage>
</organism>
<name>PSMA2_STAA1</name>
<keyword id="KW-0204">Cytolysis</keyword>
<keyword id="KW-0843">Virulence</keyword>
<comment type="function">
    <text evidence="1">Peptide which can recruit, activate and subsequently lyse human neutrophils, thus eliminating the main cellular defense against infection.</text>
</comment>
<comment type="similarity">
    <text evidence="2">Belongs to the phenol-soluble modulin alpha peptides family.</text>
</comment>
<feature type="peptide" id="PRO_0000345043" description="Phenol-soluble modulin alpha 2 peptide">
    <location>
        <begin position="1"/>
        <end position="21"/>
    </location>
</feature>
<evidence type="ECO:0000250" key="1">
    <source>
        <dbReference type="UniProtKB" id="A9JX06"/>
    </source>
</evidence>
<evidence type="ECO:0000305" key="2"/>
<dbReference type="EMBL" id="AP009324">
    <property type="status" value="NOT_ANNOTATED_CDS"/>
    <property type="molecule type" value="Genomic_DNA"/>
</dbReference>
<dbReference type="GO" id="GO:0031640">
    <property type="term" value="P:killing of cells of another organism"/>
    <property type="evidence" value="ECO:0007669"/>
    <property type="project" value="UniProtKB-KW"/>
</dbReference>
<dbReference type="InterPro" id="IPR031429">
    <property type="entry name" value="PSM_alpha"/>
</dbReference>
<dbReference type="NCBIfam" id="NF033425">
    <property type="entry name" value="PSM_alpha_1_2"/>
    <property type="match status" value="1"/>
</dbReference>
<dbReference type="Pfam" id="PF17063">
    <property type="entry name" value="PSMalpha"/>
    <property type="match status" value="1"/>
</dbReference>
<accession>P0C7Z0</accession>
<proteinExistence type="inferred from homology"/>
<sequence>MGIIAGIIKFIKGLIEKFTGK</sequence>